<organism>
    <name type="scientific">Yersinia pestis</name>
    <dbReference type="NCBI Taxonomy" id="632"/>
    <lineage>
        <taxon>Bacteria</taxon>
        <taxon>Pseudomonadati</taxon>
        <taxon>Pseudomonadota</taxon>
        <taxon>Gammaproteobacteria</taxon>
        <taxon>Enterobacterales</taxon>
        <taxon>Yersiniaceae</taxon>
        <taxon>Yersinia</taxon>
    </lineage>
</organism>
<reference key="1">
    <citation type="journal article" date="2001" name="Nature">
        <title>Genome sequence of Yersinia pestis, the causative agent of plague.</title>
        <authorList>
            <person name="Parkhill J."/>
            <person name="Wren B.W."/>
            <person name="Thomson N.R."/>
            <person name="Titball R.W."/>
            <person name="Holden M.T.G."/>
            <person name="Prentice M.B."/>
            <person name="Sebaihia M."/>
            <person name="James K.D."/>
            <person name="Churcher C.M."/>
            <person name="Mungall K.L."/>
            <person name="Baker S."/>
            <person name="Basham D."/>
            <person name="Bentley S.D."/>
            <person name="Brooks K."/>
            <person name="Cerdeno-Tarraga A.-M."/>
            <person name="Chillingworth T."/>
            <person name="Cronin A."/>
            <person name="Davies R.M."/>
            <person name="Davis P."/>
            <person name="Dougan G."/>
            <person name="Feltwell T."/>
            <person name="Hamlin N."/>
            <person name="Holroyd S."/>
            <person name="Jagels K."/>
            <person name="Karlyshev A.V."/>
            <person name="Leather S."/>
            <person name="Moule S."/>
            <person name="Oyston P.C.F."/>
            <person name="Quail M.A."/>
            <person name="Rutherford K.M."/>
            <person name="Simmonds M."/>
            <person name="Skelton J."/>
            <person name="Stevens K."/>
            <person name="Whitehead S."/>
            <person name="Barrell B.G."/>
        </authorList>
    </citation>
    <scope>NUCLEOTIDE SEQUENCE [LARGE SCALE GENOMIC DNA]</scope>
    <source>
        <strain>CO-92 / Biovar Orientalis</strain>
    </source>
</reference>
<reference key="2">
    <citation type="journal article" date="2002" name="J. Bacteriol.">
        <title>Genome sequence of Yersinia pestis KIM.</title>
        <authorList>
            <person name="Deng W."/>
            <person name="Burland V."/>
            <person name="Plunkett G. III"/>
            <person name="Boutin A."/>
            <person name="Mayhew G.F."/>
            <person name="Liss P."/>
            <person name="Perna N.T."/>
            <person name="Rose D.J."/>
            <person name="Mau B."/>
            <person name="Zhou S."/>
            <person name="Schwartz D.C."/>
            <person name="Fetherston J.D."/>
            <person name="Lindler L.E."/>
            <person name="Brubaker R.R."/>
            <person name="Plano G.V."/>
            <person name="Straley S.C."/>
            <person name="McDonough K.A."/>
            <person name="Nilles M.L."/>
            <person name="Matson J.S."/>
            <person name="Blattner F.R."/>
            <person name="Perry R.D."/>
        </authorList>
    </citation>
    <scope>NUCLEOTIDE SEQUENCE [LARGE SCALE GENOMIC DNA]</scope>
    <source>
        <strain>KIM10+ / Biovar Mediaevalis</strain>
    </source>
</reference>
<reference key="3">
    <citation type="journal article" date="2004" name="DNA Res.">
        <title>Complete genome sequence of Yersinia pestis strain 91001, an isolate avirulent to humans.</title>
        <authorList>
            <person name="Song Y."/>
            <person name="Tong Z."/>
            <person name="Wang J."/>
            <person name="Wang L."/>
            <person name="Guo Z."/>
            <person name="Han Y."/>
            <person name="Zhang J."/>
            <person name="Pei D."/>
            <person name="Zhou D."/>
            <person name="Qin H."/>
            <person name="Pang X."/>
            <person name="Han Y."/>
            <person name="Zhai J."/>
            <person name="Li M."/>
            <person name="Cui B."/>
            <person name="Qi Z."/>
            <person name="Jin L."/>
            <person name="Dai R."/>
            <person name="Chen F."/>
            <person name="Li S."/>
            <person name="Ye C."/>
            <person name="Du Z."/>
            <person name="Lin W."/>
            <person name="Wang J."/>
            <person name="Yu J."/>
            <person name="Yang H."/>
            <person name="Wang J."/>
            <person name="Huang P."/>
            <person name="Yang R."/>
        </authorList>
    </citation>
    <scope>NUCLEOTIDE SEQUENCE [LARGE SCALE GENOMIC DNA]</scope>
    <source>
        <strain>91001 / Biovar Mediaevalis</strain>
    </source>
</reference>
<gene>
    <name evidence="1" type="primary">valS</name>
    <name type="ordered locus">YPO3443</name>
    <name type="ordered locus">y0743</name>
    <name type="ordered locus">YP_0641</name>
</gene>
<evidence type="ECO:0000255" key="1">
    <source>
        <dbReference type="HAMAP-Rule" id="MF_02004"/>
    </source>
</evidence>
<evidence type="ECO:0000256" key="2">
    <source>
        <dbReference type="SAM" id="MobiDB-lite"/>
    </source>
</evidence>
<feature type="chain" id="PRO_0000224603" description="Valine--tRNA ligase">
    <location>
        <begin position="1"/>
        <end position="965"/>
    </location>
</feature>
<feature type="region of interest" description="Disordered" evidence="2">
    <location>
        <begin position="1"/>
        <end position="22"/>
    </location>
</feature>
<feature type="coiled-coil region" evidence="1">
    <location>
        <begin position="896"/>
        <end position="965"/>
    </location>
</feature>
<feature type="short sequence motif" description="'HIGH' region">
    <location>
        <begin position="56"/>
        <end position="66"/>
    </location>
</feature>
<feature type="short sequence motif" description="'KMSKS' region">
    <location>
        <begin position="568"/>
        <end position="572"/>
    </location>
</feature>
<feature type="binding site" evidence="1">
    <location>
        <position position="571"/>
    </location>
    <ligand>
        <name>ATP</name>
        <dbReference type="ChEBI" id="CHEBI:30616"/>
    </ligand>
</feature>
<keyword id="KW-0030">Aminoacyl-tRNA synthetase</keyword>
<keyword id="KW-0067">ATP-binding</keyword>
<keyword id="KW-0175">Coiled coil</keyword>
<keyword id="KW-0963">Cytoplasm</keyword>
<keyword id="KW-0436">Ligase</keyword>
<keyword id="KW-0547">Nucleotide-binding</keyword>
<keyword id="KW-0648">Protein biosynthesis</keyword>
<keyword id="KW-1185">Reference proteome</keyword>
<dbReference type="EC" id="6.1.1.9" evidence="1"/>
<dbReference type="EMBL" id="AL590842">
    <property type="protein sequence ID" value="CAL22032.1"/>
    <property type="molecule type" value="Genomic_DNA"/>
</dbReference>
<dbReference type="EMBL" id="AE009952">
    <property type="protein sequence ID" value="AAM84330.1"/>
    <property type="molecule type" value="Genomic_DNA"/>
</dbReference>
<dbReference type="EMBL" id="AE017042">
    <property type="protein sequence ID" value="AAS60909.1"/>
    <property type="molecule type" value="Genomic_DNA"/>
</dbReference>
<dbReference type="PIR" id="AE0418">
    <property type="entry name" value="AE0418"/>
</dbReference>
<dbReference type="RefSeq" id="WP_002209307.1">
    <property type="nucleotide sequence ID" value="NZ_WUCM01000023.1"/>
</dbReference>
<dbReference type="RefSeq" id="YP_002348334.1">
    <property type="nucleotide sequence ID" value="NC_003143.1"/>
</dbReference>
<dbReference type="SMR" id="Q8ZBH1"/>
<dbReference type="IntAct" id="Q8ZBH1">
    <property type="interactions" value="1"/>
</dbReference>
<dbReference type="STRING" id="214092.YPO3443"/>
<dbReference type="PaxDb" id="214092-YPO3443"/>
<dbReference type="DNASU" id="1145690"/>
<dbReference type="EnsemblBacteria" id="AAS60909">
    <property type="protein sequence ID" value="AAS60909"/>
    <property type="gene ID" value="YP_0641"/>
</dbReference>
<dbReference type="KEGG" id="ype:YPO3443"/>
<dbReference type="KEGG" id="ypk:y0743"/>
<dbReference type="KEGG" id="ypm:YP_0641"/>
<dbReference type="PATRIC" id="fig|214092.21.peg.3932"/>
<dbReference type="eggNOG" id="COG0525">
    <property type="taxonomic scope" value="Bacteria"/>
</dbReference>
<dbReference type="HOGENOM" id="CLU_001493_0_2_6"/>
<dbReference type="OMA" id="LDTWMDS"/>
<dbReference type="OrthoDB" id="9810365at2"/>
<dbReference type="Proteomes" id="UP000000815">
    <property type="component" value="Chromosome"/>
</dbReference>
<dbReference type="Proteomes" id="UP000001019">
    <property type="component" value="Chromosome"/>
</dbReference>
<dbReference type="Proteomes" id="UP000002490">
    <property type="component" value="Chromosome"/>
</dbReference>
<dbReference type="GO" id="GO:0005829">
    <property type="term" value="C:cytosol"/>
    <property type="evidence" value="ECO:0000318"/>
    <property type="project" value="GO_Central"/>
</dbReference>
<dbReference type="GO" id="GO:0002161">
    <property type="term" value="F:aminoacyl-tRNA deacylase activity"/>
    <property type="evidence" value="ECO:0007669"/>
    <property type="project" value="InterPro"/>
</dbReference>
<dbReference type="GO" id="GO:0005524">
    <property type="term" value="F:ATP binding"/>
    <property type="evidence" value="ECO:0007669"/>
    <property type="project" value="UniProtKB-UniRule"/>
</dbReference>
<dbReference type="GO" id="GO:0004832">
    <property type="term" value="F:valine-tRNA ligase activity"/>
    <property type="evidence" value="ECO:0000318"/>
    <property type="project" value="GO_Central"/>
</dbReference>
<dbReference type="GO" id="GO:0006438">
    <property type="term" value="P:valyl-tRNA aminoacylation"/>
    <property type="evidence" value="ECO:0000318"/>
    <property type="project" value="GO_Central"/>
</dbReference>
<dbReference type="CDD" id="cd07962">
    <property type="entry name" value="Anticodon_Ia_Val"/>
    <property type="match status" value="1"/>
</dbReference>
<dbReference type="CDD" id="cd00817">
    <property type="entry name" value="ValRS_core"/>
    <property type="match status" value="1"/>
</dbReference>
<dbReference type="FunFam" id="1.10.287.380:FF:000001">
    <property type="entry name" value="Valine--tRNA ligase"/>
    <property type="match status" value="1"/>
</dbReference>
<dbReference type="FunFam" id="1.10.730.10:FF:000007">
    <property type="entry name" value="Valine--tRNA ligase"/>
    <property type="match status" value="1"/>
</dbReference>
<dbReference type="FunFam" id="3.40.50.620:FF:000032">
    <property type="entry name" value="Valine--tRNA ligase"/>
    <property type="match status" value="1"/>
</dbReference>
<dbReference type="FunFam" id="3.40.50.620:FF:000146">
    <property type="entry name" value="Valine--tRNA ligase"/>
    <property type="match status" value="1"/>
</dbReference>
<dbReference type="FunFam" id="3.90.740.10:FF:000003">
    <property type="entry name" value="Valine--tRNA ligase"/>
    <property type="match status" value="1"/>
</dbReference>
<dbReference type="FunFam" id="3.90.740.10:FF:000004">
    <property type="entry name" value="Valine--tRNA ligase"/>
    <property type="match status" value="1"/>
</dbReference>
<dbReference type="Gene3D" id="3.40.50.620">
    <property type="entry name" value="HUPs"/>
    <property type="match status" value="2"/>
</dbReference>
<dbReference type="Gene3D" id="1.10.730.10">
    <property type="entry name" value="Isoleucyl-tRNA Synthetase, Domain 1"/>
    <property type="match status" value="1"/>
</dbReference>
<dbReference type="Gene3D" id="1.10.287.380">
    <property type="entry name" value="Valyl-tRNA synthetase, C-terminal domain"/>
    <property type="match status" value="1"/>
</dbReference>
<dbReference type="Gene3D" id="3.90.740.10">
    <property type="entry name" value="Valyl/Leucyl/Isoleucyl-tRNA synthetase, editing domain"/>
    <property type="match status" value="2"/>
</dbReference>
<dbReference type="HAMAP" id="MF_02004">
    <property type="entry name" value="Val_tRNA_synth_type1"/>
    <property type="match status" value="1"/>
</dbReference>
<dbReference type="InterPro" id="IPR001412">
    <property type="entry name" value="aa-tRNA-synth_I_CS"/>
</dbReference>
<dbReference type="InterPro" id="IPR002300">
    <property type="entry name" value="aa-tRNA-synth_Ia"/>
</dbReference>
<dbReference type="InterPro" id="IPR033705">
    <property type="entry name" value="Anticodon_Ia_Val"/>
</dbReference>
<dbReference type="InterPro" id="IPR013155">
    <property type="entry name" value="M/V/L/I-tRNA-synth_anticd-bd"/>
</dbReference>
<dbReference type="InterPro" id="IPR014729">
    <property type="entry name" value="Rossmann-like_a/b/a_fold"/>
</dbReference>
<dbReference type="InterPro" id="IPR010978">
    <property type="entry name" value="tRNA-bd_arm"/>
</dbReference>
<dbReference type="InterPro" id="IPR009080">
    <property type="entry name" value="tRNAsynth_Ia_anticodon-bd"/>
</dbReference>
<dbReference type="InterPro" id="IPR037118">
    <property type="entry name" value="Val-tRNA_synth_C_sf"/>
</dbReference>
<dbReference type="InterPro" id="IPR019499">
    <property type="entry name" value="Val-tRNA_synth_tRNA-bd"/>
</dbReference>
<dbReference type="InterPro" id="IPR009008">
    <property type="entry name" value="Val/Leu/Ile-tRNA-synth_edit"/>
</dbReference>
<dbReference type="InterPro" id="IPR002303">
    <property type="entry name" value="Valyl-tRNA_ligase"/>
</dbReference>
<dbReference type="NCBIfam" id="NF004349">
    <property type="entry name" value="PRK05729.1"/>
    <property type="match status" value="1"/>
</dbReference>
<dbReference type="NCBIfam" id="TIGR00422">
    <property type="entry name" value="valS"/>
    <property type="match status" value="1"/>
</dbReference>
<dbReference type="PANTHER" id="PTHR11946:SF93">
    <property type="entry name" value="VALINE--TRNA LIGASE, CHLOROPLASTIC_MITOCHONDRIAL 2"/>
    <property type="match status" value="1"/>
</dbReference>
<dbReference type="PANTHER" id="PTHR11946">
    <property type="entry name" value="VALYL-TRNA SYNTHETASES"/>
    <property type="match status" value="1"/>
</dbReference>
<dbReference type="Pfam" id="PF08264">
    <property type="entry name" value="Anticodon_1"/>
    <property type="match status" value="1"/>
</dbReference>
<dbReference type="Pfam" id="PF00133">
    <property type="entry name" value="tRNA-synt_1"/>
    <property type="match status" value="1"/>
</dbReference>
<dbReference type="Pfam" id="PF10458">
    <property type="entry name" value="Val_tRNA-synt_C"/>
    <property type="match status" value="1"/>
</dbReference>
<dbReference type="PRINTS" id="PR00986">
    <property type="entry name" value="TRNASYNTHVAL"/>
</dbReference>
<dbReference type="SUPFAM" id="SSF47323">
    <property type="entry name" value="Anticodon-binding domain of a subclass of class I aminoacyl-tRNA synthetases"/>
    <property type="match status" value="1"/>
</dbReference>
<dbReference type="SUPFAM" id="SSF52374">
    <property type="entry name" value="Nucleotidylyl transferase"/>
    <property type="match status" value="1"/>
</dbReference>
<dbReference type="SUPFAM" id="SSF46589">
    <property type="entry name" value="tRNA-binding arm"/>
    <property type="match status" value="1"/>
</dbReference>
<dbReference type="SUPFAM" id="SSF50677">
    <property type="entry name" value="ValRS/IleRS/LeuRS editing domain"/>
    <property type="match status" value="1"/>
</dbReference>
<dbReference type="PROSITE" id="PS00178">
    <property type="entry name" value="AA_TRNA_LIGASE_I"/>
    <property type="match status" value="1"/>
</dbReference>
<protein>
    <recommendedName>
        <fullName evidence="1">Valine--tRNA ligase</fullName>
        <ecNumber evidence="1">6.1.1.9</ecNumber>
    </recommendedName>
    <alternativeName>
        <fullName evidence="1">Valyl-tRNA synthetase</fullName>
        <shortName evidence="1">ValRS</shortName>
    </alternativeName>
</protein>
<name>SYV_YERPE</name>
<proteinExistence type="inferred from homology"/>
<sequence>MENTPSHINKTEPSLDKTYSPQEIEQPLYEHWEKQGYFKPNGDTSKESYCIMIPPPNVTGSLHMGHAFQQTIMDTLIRYQRMQGKNTLWQAGTDHAGIATQMVVERKIAAEEGKTRHDYGRDAFIDKIWEWKGESGGTITRQMRRLGNSVDWERERFTMDEGLSNAVKEVFVRLHKEDLIYRGKRLVNWDPKLRTAISDLEVENRESKGSMWHLRYPLADGAKTAEGKDYLVVATTRPETVLGDTGVAVNPEDPRYKDLIGKEVILPLVGRRIPILGDEHADMEKGTGCVKITPAHDFNDYEVGKRHALPMINILTFDGDIRSEAEVFDTHGEATDAFSNAIPAQFQGLERFAARKAVVAEFEKLGLLEEVKPHDLTVPYGDRGGVVIEPMLTDQWYVHTAPLAKVAIEAVENGEIQFVPKQYENMYYSWMRDIQDWCISRQLWWGHRIPAWYDEQGNVYVGRDEAEVRRDNNLGAEVALRQDEDVLDTWFSSGLWTFSTLGWPEQTDALKTFHPTSVVVSGFDIIFFWIARMIMLTMHFMKDENGKPQVPFKTVYMTGLIRDDEGQKMSKSKGNVIDPLDMVDGISLEALLEKRTGNMMQPQLAEKIRKRTEKQFPNGIEPHGTDALRFTLAALASTGRDINWDMKRLEGYRNFCNKLWNASRFVLMNTEGQDCGQNGGEMVLSLADRWILAEFNQTIKAYREAMDTYRFDLAAGILYEFTWNQFCDWYLELTKPVMNSGSEAELRGTRHTLIQVLEALLRLAHPIIPYITETIWQRVKNLKGITADTIMLQPFPEYDASQVDEQALSDLEWIKQTIIAVRNIRAEMNIAPGKPLEVMLRGANAQAQRRVLENQSFIQSLARLSSLTLLAEGDKGPVSVTKLVEGAEVLIPMAGLIDKATELDRLAKEVAKLDAEIERIEGKLGNEGFVARAPEAVVAKERERLAACAEAKQKLIEQQATIAAL</sequence>
<comment type="function">
    <text evidence="1">Catalyzes the attachment of valine to tRNA(Val). As ValRS can inadvertently accommodate and process structurally similar amino acids such as threonine, to avoid such errors, it has a 'posttransfer' editing activity that hydrolyzes mischarged Thr-tRNA(Val) in a tRNA-dependent manner.</text>
</comment>
<comment type="catalytic activity">
    <reaction evidence="1">
        <text>tRNA(Val) + L-valine + ATP = L-valyl-tRNA(Val) + AMP + diphosphate</text>
        <dbReference type="Rhea" id="RHEA:10704"/>
        <dbReference type="Rhea" id="RHEA-COMP:9672"/>
        <dbReference type="Rhea" id="RHEA-COMP:9708"/>
        <dbReference type="ChEBI" id="CHEBI:30616"/>
        <dbReference type="ChEBI" id="CHEBI:33019"/>
        <dbReference type="ChEBI" id="CHEBI:57762"/>
        <dbReference type="ChEBI" id="CHEBI:78442"/>
        <dbReference type="ChEBI" id="CHEBI:78537"/>
        <dbReference type="ChEBI" id="CHEBI:456215"/>
        <dbReference type="EC" id="6.1.1.9"/>
    </reaction>
</comment>
<comment type="subunit">
    <text evidence="1">Monomer.</text>
</comment>
<comment type="subcellular location">
    <subcellularLocation>
        <location evidence="1">Cytoplasm</location>
    </subcellularLocation>
</comment>
<comment type="domain">
    <text evidence="1">ValRS has two distinct active sites: one for aminoacylation and one for editing. The misactivated threonine is translocated from the active site to the editing site.</text>
</comment>
<comment type="domain">
    <text evidence="1">The C-terminal coiled-coil domain is crucial for aminoacylation activity.</text>
</comment>
<comment type="similarity">
    <text evidence="1">Belongs to the class-I aminoacyl-tRNA synthetase family. ValS type 1 subfamily.</text>
</comment>
<accession>Q8ZBH1</accession>
<accession>Q0WBK4</accession>
<accession>Q74X23</accession>
<accession>Q7CKF5</accession>